<proteinExistence type="evidence at protein level"/>
<name>EUTC_SALTY</name>
<evidence type="ECO:0000250" key="1">
    <source>
        <dbReference type="UniProtKB" id="P19636"/>
    </source>
</evidence>
<evidence type="ECO:0000255" key="2">
    <source>
        <dbReference type="HAMAP-Rule" id="MF_00601"/>
    </source>
</evidence>
<evidence type="ECO:0000269" key="3">
    <source>
    </source>
</evidence>
<evidence type="ECO:0000269" key="4">
    <source>
    </source>
</evidence>
<evidence type="ECO:0000269" key="5">
    <source>
    </source>
</evidence>
<evidence type="ECO:0000269" key="6">
    <source>
    </source>
</evidence>
<evidence type="ECO:0000269" key="7">
    <source>
    </source>
</evidence>
<evidence type="ECO:0000269" key="8">
    <source>
    </source>
</evidence>
<evidence type="ECO:0000269" key="9">
    <source>
    </source>
</evidence>
<evidence type="ECO:0000269" key="10">
    <source>
    </source>
</evidence>
<evidence type="ECO:0000269" key="11">
    <source>
    </source>
</evidence>
<evidence type="ECO:0000269" key="12">
    <source>
    </source>
</evidence>
<evidence type="ECO:0000303" key="13">
    <source>
    </source>
</evidence>
<evidence type="ECO:0000303" key="14">
    <source>
    </source>
</evidence>
<evidence type="ECO:0000305" key="15"/>
<evidence type="ECO:0000305" key="16">
    <source>
    </source>
</evidence>
<evidence type="ECO:0000305" key="17">
    <source>
    </source>
</evidence>
<evidence type="ECO:0000305" key="18">
    <source>
    </source>
</evidence>
<evidence type="ECO:0000305" key="19">
    <source>
    </source>
</evidence>
<evidence type="ECO:0000305" key="20">
    <source>
    </source>
</evidence>
<evidence type="ECO:0000305" key="21">
    <source>
    </source>
</evidence>
<evidence type="ECO:0000305" key="22">
    <source>
    </source>
</evidence>
<evidence type="ECO:0000305" key="23">
    <source>
    </source>
</evidence>
<gene>
    <name evidence="2 14" type="primary">eutC</name>
    <name type="ordered locus">STM2457</name>
</gene>
<keyword id="KW-1283">Bacterial microcompartment</keyword>
<keyword id="KW-0846">Cobalamin</keyword>
<keyword id="KW-0170">Cobalt</keyword>
<keyword id="KW-0456">Lyase</keyword>
<keyword id="KW-1185">Reference proteome</keyword>
<keyword id="KW-0843">Virulence</keyword>
<organism>
    <name type="scientific">Salmonella typhimurium (strain LT2 / SGSC1412 / ATCC 700720)</name>
    <dbReference type="NCBI Taxonomy" id="99287"/>
    <lineage>
        <taxon>Bacteria</taxon>
        <taxon>Pseudomonadati</taxon>
        <taxon>Pseudomonadota</taxon>
        <taxon>Gammaproteobacteria</taxon>
        <taxon>Enterobacterales</taxon>
        <taxon>Enterobacteriaceae</taxon>
        <taxon>Salmonella</taxon>
    </lineage>
</organism>
<dbReference type="EC" id="4.3.1.7" evidence="2 4"/>
<dbReference type="EMBL" id="J05518">
    <property type="protein sequence ID" value="AAA27062.1"/>
    <property type="molecule type" value="Genomic_DNA"/>
</dbReference>
<dbReference type="EMBL" id="AF093749">
    <property type="protein sequence ID" value="AAC78124.1"/>
    <property type="molecule type" value="Genomic_DNA"/>
</dbReference>
<dbReference type="EMBL" id="AE006468">
    <property type="protein sequence ID" value="AAL21351.1"/>
    <property type="molecule type" value="Genomic_DNA"/>
</dbReference>
<dbReference type="PIR" id="B36570">
    <property type="entry name" value="B36570"/>
</dbReference>
<dbReference type="RefSeq" id="NP_461392.1">
    <property type="nucleotide sequence ID" value="NC_003197.2"/>
</dbReference>
<dbReference type="RefSeq" id="WP_000372335.1">
    <property type="nucleotide sequence ID" value="NC_003197.2"/>
</dbReference>
<dbReference type="SMR" id="P19265"/>
<dbReference type="STRING" id="99287.STM2457"/>
<dbReference type="PaxDb" id="99287-STM2457"/>
<dbReference type="DNASU" id="1253979"/>
<dbReference type="GeneID" id="1253979"/>
<dbReference type="KEGG" id="stm:STM2457"/>
<dbReference type="PATRIC" id="fig|99287.12.peg.2595"/>
<dbReference type="HOGENOM" id="CLU_068224_2_0_6"/>
<dbReference type="OMA" id="FQFAHAQ"/>
<dbReference type="PhylomeDB" id="P19265"/>
<dbReference type="BioCyc" id="SENT99287:STM2457-MONOMER"/>
<dbReference type="BRENDA" id="4.3.1.7">
    <property type="organism ID" value="5542"/>
</dbReference>
<dbReference type="UniPathway" id="UPA00560"/>
<dbReference type="Proteomes" id="UP000001014">
    <property type="component" value="Chromosome"/>
</dbReference>
<dbReference type="GO" id="GO:0009350">
    <property type="term" value="C:ethanolamine ammonia-lyase complex"/>
    <property type="evidence" value="ECO:0000314"/>
    <property type="project" value="UniProtKB"/>
</dbReference>
<dbReference type="GO" id="GO:0031471">
    <property type="term" value="C:ethanolamine degradation polyhedral organelle"/>
    <property type="evidence" value="ECO:0000315"/>
    <property type="project" value="UniProtKB"/>
</dbReference>
<dbReference type="GO" id="GO:0031419">
    <property type="term" value="F:cobalamin binding"/>
    <property type="evidence" value="ECO:0007669"/>
    <property type="project" value="UniProtKB-UniRule"/>
</dbReference>
<dbReference type="GO" id="GO:0008851">
    <property type="term" value="F:ethanolamine ammonia-lyase activity"/>
    <property type="evidence" value="ECO:0007669"/>
    <property type="project" value="UniProtKB-UniRule"/>
</dbReference>
<dbReference type="GO" id="GO:0006520">
    <property type="term" value="P:amino acid metabolic process"/>
    <property type="evidence" value="ECO:0007669"/>
    <property type="project" value="InterPro"/>
</dbReference>
<dbReference type="GO" id="GO:0046336">
    <property type="term" value="P:ethanolamine catabolic process"/>
    <property type="evidence" value="ECO:0007669"/>
    <property type="project" value="UniProtKB-UniRule"/>
</dbReference>
<dbReference type="FunFam" id="3.40.50.11240:FF:000001">
    <property type="entry name" value="Ethanolamine ammonia-lyase light chain"/>
    <property type="match status" value="1"/>
</dbReference>
<dbReference type="Gene3D" id="6.10.140.690">
    <property type="match status" value="1"/>
</dbReference>
<dbReference type="Gene3D" id="6.10.250.2060">
    <property type="match status" value="1"/>
</dbReference>
<dbReference type="Gene3D" id="3.40.50.11240">
    <property type="entry name" value="Ethanolamine ammonia-lyase light chain (EutC)"/>
    <property type="match status" value="1"/>
</dbReference>
<dbReference type="HAMAP" id="MF_00601">
    <property type="entry name" value="EutC"/>
    <property type="match status" value="1"/>
</dbReference>
<dbReference type="InterPro" id="IPR009246">
    <property type="entry name" value="EutC"/>
</dbReference>
<dbReference type="InterPro" id="IPR042251">
    <property type="entry name" value="EutC_C"/>
</dbReference>
<dbReference type="NCBIfam" id="NF003971">
    <property type="entry name" value="PRK05465.1"/>
    <property type="match status" value="1"/>
</dbReference>
<dbReference type="PANTHER" id="PTHR39330">
    <property type="entry name" value="ETHANOLAMINE AMMONIA-LYASE LIGHT CHAIN"/>
    <property type="match status" value="1"/>
</dbReference>
<dbReference type="PANTHER" id="PTHR39330:SF1">
    <property type="entry name" value="ETHANOLAMINE AMMONIA-LYASE SMALL SUBUNIT"/>
    <property type="match status" value="1"/>
</dbReference>
<dbReference type="Pfam" id="PF05985">
    <property type="entry name" value="EutC"/>
    <property type="match status" value="1"/>
</dbReference>
<dbReference type="PIRSF" id="PIRSF018982">
    <property type="entry name" value="EutC"/>
    <property type="match status" value="1"/>
</dbReference>
<accession>P19265</accession>
<accession>Q9ZFV0</accession>
<sequence length="298" mass="32137">MDQKQIEEIVRSVMASMGQDVPQPAAPSTQEGAKPQCAAPTVTESCALDLGSAEAKAWIGVENPHRADVLTELRRSTAARVCTGRAGPRPRTQALLRFLADHSRSKDTVLKEVPEEWVKAQGLLEVRSEISDKNLYLTRPDMGRRLSPEAIDALKSQCVMNPDVQVVVSDGLSTDAITANYEEILPPLLAGLKQAGLNVGTPFFVRYGRVKIEDQIGEILGAKVVILLVGERPGLGQSESLSCYAVYSPRVATTVEADRTCISNIHQGGTPPVEAAAVIVDLAKRMLEQKASGINMTR</sequence>
<reference key="1">
    <citation type="journal article" date="1990" name="J. Biol. Chem.">
        <title>Cloning, sequencing, and expression of the genes encoding the adenosylcobalamin-dependent ethanolamine ammonia-lyase of Salmonella typhimurium.</title>
        <authorList>
            <person name="Faust L.R.P."/>
            <person name="Connor J.A."/>
            <person name="Roof D.M."/>
            <person name="Hoch J.A."/>
            <person name="Babior B.M."/>
        </authorList>
    </citation>
    <scope>NUCLEOTIDE SEQUENCE [GENOMIC DNA]</scope>
    <scope>FUNCTION</scope>
    <source>
        <strain>LT2</strain>
    </source>
</reference>
<reference key="2">
    <citation type="journal article" date="1999" name="J. Bacteriol.">
        <title>The 17-gene ethanolamine (eut) operon of Salmonella typhimurium encodes five homologues of carboxysome shell proteins.</title>
        <authorList>
            <person name="Kofoid E.C."/>
            <person name="Rappleye C.A."/>
            <person name="Stojiljkovic I."/>
            <person name="Roth J.R."/>
        </authorList>
    </citation>
    <scope>NUCLEOTIDE SEQUENCE [GENOMIC DNA]</scope>
    <scope>DISRUPTION PHENOTYPE</scope>
    <scope>SEQUENCE REVISION</scope>
    <source>
        <strain>LT2</strain>
    </source>
</reference>
<reference key="3">
    <citation type="journal article" date="2001" name="Nature">
        <title>Complete genome sequence of Salmonella enterica serovar Typhimurium LT2.</title>
        <authorList>
            <person name="McClelland M."/>
            <person name="Sanderson K.E."/>
            <person name="Spieth J."/>
            <person name="Clifton S.W."/>
            <person name="Latreille P."/>
            <person name="Courtney L."/>
            <person name="Porwollik S."/>
            <person name="Ali J."/>
            <person name="Dante M."/>
            <person name="Du F."/>
            <person name="Hou S."/>
            <person name="Layman D."/>
            <person name="Leonard S."/>
            <person name="Nguyen C."/>
            <person name="Scott K."/>
            <person name="Holmes A."/>
            <person name="Grewal N."/>
            <person name="Mulvaney E."/>
            <person name="Ryan E."/>
            <person name="Sun H."/>
            <person name="Florea L."/>
            <person name="Miller W."/>
            <person name="Stoneking T."/>
            <person name="Nhan M."/>
            <person name="Waterston R."/>
            <person name="Wilson R.K."/>
        </authorList>
    </citation>
    <scope>NUCLEOTIDE SEQUENCE [LARGE SCALE GENOMIC DNA]</scope>
    <source>
        <strain>LT2 / SGSC1412 / ATCC 700720</strain>
    </source>
</reference>
<reference key="4">
    <citation type="journal article" date="1988" name="J. Bacteriol.">
        <title>Ethanolamine utilization in Salmonella typhimurium.</title>
        <authorList>
            <person name="Roof D.M."/>
            <person name="Roth J.R."/>
        </authorList>
    </citation>
    <scope>FUNCTION</scope>
    <scope>PATHWAY</scope>
    <scope>OPERON</scope>
    <scope>INDUCTION BY ETHANOLAMINE AND COBALAMIN</scope>
    <source>
        <strain>LT2</strain>
    </source>
</reference>
<reference key="5">
    <citation type="journal article" date="1989" name="J. Bacteriol.">
        <title>Functions required for vitamin B12-dependent ethanolamine utilization in Salmonella typhimurium.</title>
        <authorList>
            <person name="Roof D.M."/>
            <person name="Roth J.R."/>
        </authorList>
    </citation>
    <scope>FUNCTION</scope>
    <scope>DISRUPTION PHENOTYPE</scope>
    <source>
        <strain>LT2</strain>
    </source>
</reference>
<reference key="6">
    <citation type="journal article" date="1992" name="Arch. Biochem. Biophys.">
        <title>Overexpression, purification, and some properties of the AdoCbl-dependent ethanolamine ammonia-lyase from Salmonella typhimurium.</title>
        <authorList>
            <person name="Faust L.P."/>
            <person name="Babior B.M."/>
        </authorList>
    </citation>
    <scope>FUNCTION</scope>
    <scope>CATALYTIC ACTIVITY</scope>
    <scope>COFACTOR</scope>
    <scope>BIOPHYSICOCHEMICAL PROPERTIES</scope>
    <scope>SUBUNIT</scope>
    <source>
        <strain>LT2</strain>
    </source>
</reference>
<reference key="7">
    <citation type="journal article" date="2006" name="J. Bacteriol.">
        <title>Conserving a volatile metabolite: a role for carboxysome-like organelles in Salmonella enterica.</title>
        <authorList>
            <person name="Penrod J.T."/>
            <person name="Roth J.R."/>
        </authorList>
    </citation>
    <scope>DISRUPTION PHENOTYPE</scope>
    <source>
        <strain>LT2</strain>
    </source>
</reference>
<reference key="8">
    <citation type="journal article" date="2012" name="PLoS ONE">
        <title>Engineered protein nano-compartments for targeted enzyme localization.</title>
        <authorList>
            <person name="Choudhary S."/>
            <person name="Quin M.B."/>
            <person name="Sanders M.A."/>
            <person name="Johnson E.T."/>
            <person name="Schmidt-Dannert C."/>
        </authorList>
    </citation>
    <scope>FUNCTION</scope>
    <scope>INTERACTION WITH EUTS</scope>
    <scope>SUBUNIT</scope>
    <scope>SUBCELLULAR LOCATION</scope>
    <scope>DOMAIN</scope>
    <scope>BIOTECHNOLOGY</scope>
    <source>
        <strain>LT2</strain>
    </source>
</reference>
<reference key="9">
    <citation type="journal article" date="2013" name="J. Bacteriol.">
        <title>Evidence that a metabolic microcompartment contains and recycles private cofactor pools.</title>
        <authorList>
            <person name="Huseby D.L."/>
            <person name="Roth J.R."/>
        </authorList>
    </citation>
    <scope>FUNCTION</scope>
    <scope>DISRUPTION PHENOTYPE</scope>
    <source>
        <strain>LT2</strain>
    </source>
</reference>
<reference key="10">
    <citation type="journal article" date="2016" name="Sci. Rep.">
        <title>Engineering formation of multiple recombinant Eut protein nanocompartments in E. coli.</title>
        <authorList>
            <person name="Held M."/>
            <person name="Kolb A."/>
            <person name="Perdue S."/>
            <person name="Hsu S.Y."/>
            <person name="Bloch S.E."/>
            <person name="Quin M.B."/>
            <person name="Schmidt-Dannert C."/>
        </authorList>
    </citation>
    <scope>FUNCTION</scope>
    <scope>SUBUNIT</scope>
    <scope>SUBCELLULAR LOCATION</scope>
    <scope>BIOTECHNOLOGY</scope>
    <source>
        <strain>LT2</strain>
    </source>
</reference>
<reference key="11">
    <citation type="journal article" date="2016" name="Appl. Microbiol. Biotechnol.">
        <title>Encapsulation of multiple cargo proteins within recombinant Eut nanocompartments.</title>
        <authorList>
            <person name="Quin M.B."/>
            <person name="Perdue S.A."/>
            <person name="Hsu S.Y."/>
            <person name="Schmidt-Dannert C."/>
        </authorList>
    </citation>
    <scope>FUNCTION</scope>
    <scope>SUBUNIT</scope>
    <scope>SUBCELLULAR LOCATION</scope>
    <scope>DOMAIN</scope>
    <scope>BIOTECHNOLOGY</scope>
    <source>
        <strain>LT2</strain>
    </source>
</reference>
<reference key="12">
    <citation type="journal article" date="2018" name="Infect. Immun.">
        <title>The Ethanolamine Permease EutH Promotes Vacuole Adaptation of Salmonella enterica and Listeria monocytogenes during Macrophage Infection.</title>
        <authorList>
            <person name="Anderson C.J."/>
            <person name="Satkovich J."/>
            <person name="Koeseoglu V.K."/>
            <person name="Agaisse H."/>
            <person name="Kendall M.M."/>
        </authorList>
    </citation>
    <scope>FUNCTION</scope>
    <source>
        <strain>SL1344</strain>
    </source>
</reference>
<comment type="function">
    <text evidence="1 6 9 10 16 17 19">Catalyzes the deamination of various vicinal amino-alcohols to oxo compounds (Probable). It is spontaneously inactivated by its substrate and reactivated by EutA (By similarity). May play a role in bacterial microcompartment (BMC) assembly or maintenance (Probable). Directly targeted to the BMC (PubMed:22428024, PubMed:27063436, PubMed:27450681).</text>
</comment>
<comment type="function">
    <text evidence="11 12">Expression of the eut operon allows this bacteria to use ethanolamine (EA) as a carbon, nitrogen and energy source. It relies on cobalamin (vitamin B12) both as a cofactor for the ethanolamine ammonia-lyase activity and to induce the operon. EA enhances bacterial survival in macrophages in a concentration-dependent manner, suggesting it is an important nutrient during infection (PubMed:29531136).</text>
</comment>
<comment type="catalytic activity">
    <reaction evidence="2 4 20 23">
        <text>ethanolamine = acetaldehyde + NH4(+)</text>
        <dbReference type="Rhea" id="RHEA:15313"/>
        <dbReference type="ChEBI" id="CHEBI:15343"/>
        <dbReference type="ChEBI" id="CHEBI:28938"/>
        <dbReference type="ChEBI" id="CHEBI:57603"/>
        <dbReference type="EC" id="4.3.1.7"/>
    </reaction>
</comment>
<comment type="cofactor">
    <cofactor evidence="2 4">
        <name>adenosylcob(III)alamin</name>
        <dbReference type="ChEBI" id="CHEBI:18408"/>
    </cofactor>
    <text evidence="2">Binds between the large and small subunits.</text>
</comment>
<comment type="biophysicochemical properties">
    <kinetics>
        <KM evidence="4">0.51 uM for adenosylcob(III)alamin</KM>
    </kinetics>
</comment>
<comment type="pathway">
    <text evidence="2 12">Amine and polyamine degradation; ethanolamine degradation.</text>
</comment>
<comment type="subunit">
    <text evidence="4 6 9 10 16">The basic unit is a heterodimer which dimerizes to form tetramers (PubMed:1550360). The heterotetramers trimerize; 6 large subunits form a core ring with 6 small subunits projecting outwards (Probable). Interacts with EutS, which targets it to the interior of the BMC (PubMed:22428024, PubMed:27063436, PubMed:27450681).</text>
</comment>
<comment type="subcellular location">
    <subcellularLocation>
        <location evidence="2 6 9 10">Bacterial microcompartment</location>
    </subcellularLocation>
    <text evidence="7 18 19 21 22">Probably located inside the BMC (Probable). Has been suggested to be on the BMC exterior.</text>
</comment>
<comment type="induction">
    <text evidence="12">Part of the 17-gene eut operon transcribed from a single promoter, induced by ethanolamine and adenosylcobalamin (AdoCbl, vitamin B12).</text>
</comment>
<comment type="domain">
    <text evidence="6 9 10">The first 19 residues target foreign proteins (tested with eGFP, mCherry and lacZ) to the BMC both in situ and in E.coli. The cargo is only detected by Western blot in broken shells, strongly suggesting this protein is normally found inside the BMC and not on its exterior.</text>
</comment>
<comment type="disruption phenotype">
    <text evidence="3 5 7 8">No aerobic growth on ethanolamine (EA) supplemented with cobalamin (vitamin B12) (PubMed:10464203, PubMed:2656649). A non-polar deletion mutant does not grow on EA between pH 5.5 and pH 8.5 (PubMed:16585748). A deletion allows growth on acetate, suggesting BMC assembly or maintenance is impaired (PubMed:23585538).</text>
</comment>
<comment type="biotechnology">
    <text evidence="6 9">Artificial BMCs can be made in E.coli by expressing eutK, eutL, eutM, eutN, eutS (eutSMNLK) or eutS alone. Cargo proteins can be targeted to them using the first 19 residues of this protein. Beta-galactosidase (lacZ) was active within the BMC, showing the BMC allows passage of substrate into the interior. This can lead to the development of tailored BMCs for specific metabolic reactions.</text>
</comment>
<comment type="similarity">
    <text evidence="2">Belongs to the EutC family.</text>
</comment>
<protein>
    <recommendedName>
        <fullName evidence="2 14">Ethanolamine ammonia-lyase small subunit</fullName>
        <shortName evidence="2">EAL small subunit</shortName>
        <ecNumber evidence="2 4">4.3.1.7</ecNumber>
    </recommendedName>
    <alternativeName>
        <fullName evidence="13">Ethanolamine ammonia-lyase beta subunit</fullName>
    </alternativeName>
</protein>
<feature type="chain" id="PRO_0000206003" description="Ethanolamine ammonia-lyase small subunit">
    <location>
        <begin position="1"/>
        <end position="298"/>
    </location>
</feature>
<feature type="region of interest" description="Targets protein to the BMC" evidence="6 7 10">
    <location>
        <begin position="1"/>
        <end position="19"/>
    </location>
</feature>
<feature type="binding site" evidence="2">
    <location>
        <position position="210"/>
    </location>
    <ligand>
        <name>adenosylcob(III)alamin</name>
        <dbReference type="ChEBI" id="CHEBI:18408"/>
    </ligand>
</feature>
<feature type="binding site" evidence="2">
    <location>
        <position position="231"/>
    </location>
    <ligand>
        <name>adenosylcob(III)alamin</name>
        <dbReference type="ChEBI" id="CHEBI:18408"/>
    </ligand>
</feature>
<feature type="binding site" evidence="2">
    <location>
        <position position="261"/>
    </location>
    <ligand>
        <name>adenosylcob(III)alamin</name>
        <dbReference type="ChEBI" id="CHEBI:18408"/>
    </ligand>
</feature>
<feature type="sequence conflict" description="In Ref. 1; AAA27062." evidence="15" ref="1">
    <original>S</original>
    <variation>T</variation>
    <location>
        <position position="45"/>
    </location>
</feature>
<feature type="sequence conflict" description="In Ref. 1; AAA27062." evidence="15" ref="1">
    <original>CTGRAGPRPRTQALLR</original>
    <variation>LYGACRAASAHPGAVA</variation>
    <location>
        <begin position="82"/>
        <end position="97"/>
    </location>
</feature>
<feature type="sequence conflict" description="In Ref. 1; AAA27062." evidence="15" ref="1">
    <original>G</original>
    <variation>GLLEVRSEEWVKAQG</variation>
    <location>
        <position position="122"/>
    </location>
</feature>
<feature type="sequence conflict" description="In Ref. 1; AAA27062." evidence="15" ref="1">
    <original>TTVEADRTCISNIHQGGTPPVEAAAVIVDLAKRMLEQKASGINMTR</original>
    <variation>PPSRPTEPVFQTFIRGGRRQ</variation>
    <location>
        <begin position="253"/>
        <end position="298"/>
    </location>
</feature>